<comment type="function">
    <text evidence="1">One of the primary rRNA binding proteins, it binds directly to 16S rRNA where it nucleates assembly of the body of the 30S subunit.</text>
</comment>
<comment type="function">
    <text evidence="1">With S5 and S12 plays an important role in translational accuracy.</text>
</comment>
<comment type="subunit">
    <text evidence="1">Part of the 30S ribosomal subunit. Contacts protein S5. The interaction surface between S4 and S5 is involved in control of translational fidelity.</text>
</comment>
<comment type="similarity">
    <text evidence="1">Belongs to the universal ribosomal protein uS4 family.</text>
</comment>
<dbReference type="EMBL" id="AE016822">
    <property type="protein sequence ID" value="AAT88941.1"/>
    <property type="molecule type" value="Genomic_DNA"/>
</dbReference>
<dbReference type="RefSeq" id="WP_011185937.1">
    <property type="nucleotide sequence ID" value="NC_006087.1"/>
</dbReference>
<dbReference type="SMR" id="Q6AFA4"/>
<dbReference type="STRING" id="281090.Lxx10880"/>
<dbReference type="KEGG" id="lxx:Lxx10880"/>
<dbReference type="eggNOG" id="COG0522">
    <property type="taxonomic scope" value="Bacteria"/>
</dbReference>
<dbReference type="HOGENOM" id="CLU_092403_0_3_11"/>
<dbReference type="Proteomes" id="UP000001306">
    <property type="component" value="Chromosome"/>
</dbReference>
<dbReference type="GO" id="GO:0015935">
    <property type="term" value="C:small ribosomal subunit"/>
    <property type="evidence" value="ECO:0007669"/>
    <property type="project" value="InterPro"/>
</dbReference>
<dbReference type="GO" id="GO:0019843">
    <property type="term" value="F:rRNA binding"/>
    <property type="evidence" value="ECO:0007669"/>
    <property type="project" value="UniProtKB-UniRule"/>
</dbReference>
<dbReference type="GO" id="GO:0003735">
    <property type="term" value="F:structural constituent of ribosome"/>
    <property type="evidence" value="ECO:0007669"/>
    <property type="project" value="InterPro"/>
</dbReference>
<dbReference type="GO" id="GO:0042274">
    <property type="term" value="P:ribosomal small subunit biogenesis"/>
    <property type="evidence" value="ECO:0007669"/>
    <property type="project" value="TreeGrafter"/>
</dbReference>
<dbReference type="GO" id="GO:0006412">
    <property type="term" value="P:translation"/>
    <property type="evidence" value="ECO:0007669"/>
    <property type="project" value="UniProtKB-UniRule"/>
</dbReference>
<dbReference type="CDD" id="cd00165">
    <property type="entry name" value="S4"/>
    <property type="match status" value="1"/>
</dbReference>
<dbReference type="FunFam" id="3.10.290.10:FF:000001">
    <property type="entry name" value="30S ribosomal protein S4"/>
    <property type="match status" value="1"/>
</dbReference>
<dbReference type="Gene3D" id="1.10.1050.10">
    <property type="entry name" value="Ribosomal Protein S4 Delta 41, Chain A, domain 1"/>
    <property type="match status" value="1"/>
</dbReference>
<dbReference type="Gene3D" id="3.10.290.10">
    <property type="entry name" value="RNA-binding S4 domain"/>
    <property type="match status" value="1"/>
</dbReference>
<dbReference type="HAMAP" id="MF_01306_B">
    <property type="entry name" value="Ribosomal_uS4_B"/>
    <property type="match status" value="1"/>
</dbReference>
<dbReference type="InterPro" id="IPR022801">
    <property type="entry name" value="Ribosomal_uS4"/>
</dbReference>
<dbReference type="InterPro" id="IPR005709">
    <property type="entry name" value="Ribosomal_uS4_bac-type"/>
</dbReference>
<dbReference type="InterPro" id="IPR018079">
    <property type="entry name" value="Ribosomal_uS4_CS"/>
</dbReference>
<dbReference type="InterPro" id="IPR001912">
    <property type="entry name" value="Ribosomal_uS4_N"/>
</dbReference>
<dbReference type="InterPro" id="IPR002942">
    <property type="entry name" value="S4_RNA-bd"/>
</dbReference>
<dbReference type="InterPro" id="IPR036986">
    <property type="entry name" value="S4_RNA-bd_sf"/>
</dbReference>
<dbReference type="NCBIfam" id="NF003717">
    <property type="entry name" value="PRK05327.1"/>
    <property type="match status" value="1"/>
</dbReference>
<dbReference type="NCBIfam" id="TIGR01017">
    <property type="entry name" value="rpsD_bact"/>
    <property type="match status" value="1"/>
</dbReference>
<dbReference type="PANTHER" id="PTHR11831">
    <property type="entry name" value="30S 40S RIBOSOMAL PROTEIN"/>
    <property type="match status" value="1"/>
</dbReference>
<dbReference type="PANTHER" id="PTHR11831:SF4">
    <property type="entry name" value="SMALL RIBOSOMAL SUBUNIT PROTEIN US4M"/>
    <property type="match status" value="1"/>
</dbReference>
<dbReference type="Pfam" id="PF00163">
    <property type="entry name" value="Ribosomal_S4"/>
    <property type="match status" value="1"/>
</dbReference>
<dbReference type="Pfam" id="PF01479">
    <property type="entry name" value="S4"/>
    <property type="match status" value="1"/>
</dbReference>
<dbReference type="SMART" id="SM01390">
    <property type="entry name" value="Ribosomal_S4"/>
    <property type="match status" value="1"/>
</dbReference>
<dbReference type="SMART" id="SM00363">
    <property type="entry name" value="S4"/>
    <property type="match status" value="1"/>
</dbReference>
<dbReference type="SUPFAM" id="SSF55174">
    <property type="entry name" value="Alpha-L RNA-binding motif"/>
    <property type="match status" value="1"/>
</dbReference>
<dbReference type="PROSITE" id="PS00632">
    <property type="entry name" value="RIBOSOMAL_S4"/>
    <property type="match status" value="1"/>
</dbReference>
<dbReference type="PROSITE" id="PS50889">
    <property type="entry name" value="S4"/>
    <property type="match status" value="1"/>
</dbReference>
<organism>
    <name type="scientific">Leifsonia xyli subsp. xyli (strain CTCB07)</name>
    <dbReference type="NCBI Taxonomy" id="281090"/>
    <lineage>
        <taxon>Bacteria</taxon>
        <taxon>Bacillati</taxon>
        <taxon>Actinomycetota</taxon>
        <taxon>Actinomycetes</taxon>
        <taxon>Micrococcales</taxon>
        <taxon>Microbacteriaceae</taxon>
        <taxon>Leifsonia</taxon>
    </lineage>
</organism>
<keyword id="KW-1185">Reference proteome</keyword>
<keyword id="KW-0687">Ribonucleoprotein</keyword>
<keyword id="KW-0689">Ribosomal protein</keyword>
<keyword id="KW-0694">RNA-binding</keyword>
<keyword id="KW-0699">rRNA-binding</keyword>
<accession>Q6AFA4</accession>
<sequence length="207" mass="23446">MSSRSRSKTRESRALGIALTPKAARYMEKRPYAPGEHGRTKRKADSDYAVRLREKQRLRAQYGILEKQLRIAFEEARRTQGLTGENLVEILEMRLDALVLRAGFARTISQARQFVVHRHILVDGKLVDRPSFRVKPGQTIGVKARSEGTEPFQVAAAGGHVDVLPKTPAYLSVELDKLQARLERRPKRAEVPVTCEVQLVVEYYAAR</sequence>
<feature type="chain" id="PRO_0000132402" description="Small ribosomal subunit protein uS4">
    <location>
        <begin position="1"/>
        <end position="207"/>
    </location>
</feature>
<feature type="domain" description="S4 RNA-binding" evidence="1">
    <location>
        <begin position="93"/>
        <end position="158"/>
    </location>
</feature>
<feature type="region of interest" description="Disordered" evidence="2">
    <location>
        <begin position="20"/>
        <end position="45"/>
    </location>
</feature>
<evidence type="ECO:0000255" key="1">
    <source>
        <dbReference type="HAMAP-Rule" id="MF_01306"/>
    </source>
</evidence>
<evidence type="ECO:0000256" key="2">
    <source>
        <dbReference type="SAM" id="MobiDB-lite"/>
    </source>
</evidence>
<evidence type="ECO:0000305" key="3"/>
<proteinExistence type="inferred from homology"/>
<protein>
    <recommendedName>
        <fullName evidence="1">Small ribosomal subunit protein uS4</fullName>
    </recommendedName>
    <alternativeName>
        <fullName evidence="3">30S ribosomal protein S4</fullName>
    </alternativeName>
</protein>
<reference key="1">
    <citation type="journal article" date="2004" name="Mol. Plant Microbe Interact.">
        <title>The genome sequence of the Gram-positive sugarcane pathogen Leifsonia xyli subsp. xyli.</title>
        <authorList>
            <person name="Monteiro-Vitorello C.B."/>
            <person name="Camargo L.E.A."/>
            <person name="Van Sluys M.A."/>
            <person name="Kitajima J.P."/>
            <person name="Truffi D."/>
            <person name="do Amaral A.M."/>
            <person name="Harakava R."/>
            <person name="de Oliveira J.C.F."/>
            <person name="Wood D."/>
            <person name="de Oliveira M.C."/>
            <person name="Miyaki C.Y."/>
            <person name="Takita M.A."/>
            <person name="da Silva A.C.R."/>
            <person name="Furlan L.R."/>
            <person name="Carraro D.M."/>
            <person name="Camarotte G."/>
            <person name="Almeida N.F. Jr."/>
            <person name="Carrer H."/>
            <person name="Coutinho L.L."/>
            <person name="El-Dorry H.A."/>
            <person name="Ferro M.I.T."/>
            <person name="Gagliardi P.R."/>
            <person name="Giglioti E."/>
            <person name="Goldman M.H.S."/>
            <person name="Goldman G.H."/>
            <person name="Kimura E.T."/>
            <person name="Ferro E.S."/>
            <person name="Kuramae E.E."/>
            <person name="Lemos E.G.M."/>
            <person name="Lemos M.V.F."/>
            <person name="Mauro S.M.Z."/>
            <person name="Machado M.A."/>
            <person name="Marino C.L."/>
            <person name="Menck C.F."/>
            <person name="Nunes L.R."/>
            <person name="Oliveira R.C."/>
            <person name="Pereira G.G."/>
            <person name="Siqueira W."/>
            <person name="de Souza A.A."/>
            <person name="Tsai S.M."/>
            <person name="Zanca A.S."/>
            <person name="Simpson A.J.G."/>
            <person name="Brumbley S.M."/>
            <person name="Setubal J.C."/>
        </authorList>
    </citation>
    <scope>NUCLEOTIDE SEQUENCE [LARGE SCALE GENOMIC DNA]</scope>
    <source>
        <strain>CTCB07</strain>
    </source>
</reference>
<name>RS4_LEIXX</name>
<gene>
    <name evidence="1" type="primary">rpsD</name>
    <name type="ordered locus">Lxx10880</name>
</gene>